<organism>
    <name type="scientific">Clostridium botulinum (strain ATCC 19397 / Type A)</name>
    <dbReference type="NCBI Taxonomy" id="441770"/>
    <lineage>
        <taxon>Bacteria</taxon>
        <taxon>Bacillati</taxon>
        <taxon>Bacillota</taxon>
        <taxon>Clostridia</taxon>
        <taxon>Eubacteriales</taxon>
        <taxon>Clostridiaceae</taxon>
        <taxon>Clostridium</taxon>
    </lineage>
</organism>
<comment type="function">
    <text evidence="1">Catalyzes a trans-dehydration via an enolate intermediate.</text>
</comment>
<comment type="catalytic activity">
    <reaction evidence="1">
        <text>3-dehydroquinate = 3-dehydroshikimate + H2O</text>
        <dbReference type="Rhea" id="RHEA:21096"/>
        <dbReference type="ChEBI" id="CHEBI:15377"/>
        <dbReference type="ChEBI" id="CHEBI:16630"/>
        <dbReference type="ChEBI" id="CHEBI:32364"/>
        <dbReference type="EC" id="4.2.1.10"/>
    </reaction>
</comment>
<comment type="pathway">
    <text evidence="1">Metabolic intermediate biosynthesis; chorismate biosynthesis; chorismate from D-erythrose 4-phosphate and phosphoenolpyruvate: step 3/7.</text>
</comment>
<comment type="subunit">
    <text evidence="1">Homododecamer.</text>
</comment>
<comment type="similarity">
    <text evidence="1">Belongs to the type-II 3-dehydroquinase family.</text>
</comment>
<accession>A7FUV3</accession>
<dbReference type="EC" id="4.2.1.10" evidence="1"/>
<dbReference type="EMBL" id="CP000726">
    <property type="protein sequence ID" value="ABS32792.1"/>
    <property type="molecule type" value="Genomic_DNA"/>
</dbReference>
<dbReference type="RefSeq" id="WP_011986444.1">
    <property type="nucleotide sequence ID" value="NC_009697.1"/>
</dbReference>
<dbReference type="SMR" id="A7FUV3"/>
<dbReference type="GeneID" id="5187778"/>
<dbReference type="KEGG" id="cba:CLB_1835"/>
<dbReference type="HOGENOM" id="CLU_090968_2_0_9"/>
<dbReference type="UniPathway" id="UPA00053">
    <property type="reaction ID" value="UER00086"/>
</dbReference>
<dbReference type="GO" id="GO:0003855">
    <property type="term" value="F:3-dehydroquinate dehydratase activity"/>
    <property type="evidence" value="ECO:0007669"/>
    <property type="project" value="UniProtKB-UniRule"/>
</dbReference>
<dbReference type="GO" id="GO:0008652">
    <property type="term" value="P:amino acid biosynthetic process"/>
    <property type="evidence" value="ECO:0007669"/>
    <property type="project" value="UniProtKB-KW"/>
</dbReference>
<dbReference type="GO" id="GO:0009073">
    <property type="term" value="P:aromatic amino acid family biosynthetic process"/>
    <property type="evidence" value="ECO:0007669"/>
    <property type="project" value="UniProtKB-KW"/>
</dbReference>
<dbReference type="GO" id="GO:0009423">
    <property type="term" value="P:chorismate biosynthetic process"/>
    <property type="evidence" value="ECO:0007669"/>
    <property type="project" value="UniProtKB-UniRule"/>
</dbReference>
<dbReference type="GO" id="GO:0019631">
    <property type="term" value="P:quinate catabolic process"/>
    <property type="evidence" value="ECO:0007669"/>
    <property type="project" value="TreeGrafter"/>
</dbReference>
<dbReference type="CDD" id="cd00466">
    <property type="entry name" value="DHQase_II"/>
    <property type="match status" value="1"/>
</dbReference>
<dbReference type="Gene3D" id="3.40.50.9100">
    <property type="entry name" value="Dehydroquinase, class II"/>
    <property type="match status" value="1"/>
</dbReference>
<dbReference type="HAMAP" id="MF_00169">
    <property type="entry name" value="AroQ"/>
    <property type="match status" value="1"/>
</dbReference>
<dbReference type="InterPro" id="IPR001874">
    <property type="entry name" value="DHquinase_II"/>
</dbReference>
<dbReference type="InterPro" id="IPR018509">
    <property type="entry name" value="DHquinase_II_CS"/>
</dbReference>
<dbReference type="InterPro" id="IPR036441">
    <property type="entry name" value="DHquinase_II_sf"/>
</dbReference>
<dbReference type="NCBIfam" id="TIGR01088">
    <property type="entry name" value="aroQ"/>
    <property type="match status" value="1"/>
</dbReference>
<dbReference type="NCBIfam" id="NF003805">
    <property type="entry name" value="PRK05395.1-2"/>
    <property type="match status" value="1"/>
</dbReference>
<dbReference type="NCBIfam" id="NF003806">
    <property type="entry name" value="PRK05395.1-3"/>
    <property type="match status" value="1"/>
</dbReference>
<dbReference type="NCBIfam" id="NF003807">
    <property type="entry name" value="PRK05395.1-4"/>
    <property type="match status" value="1"/>
</dbReference>
<dbReference type="PANTHER" id="PTHR21272">
    <property type="entry name" value="CATABOLIC 3-DEHYDROQUINASE"/>
    <property type="match status" value="1"/>
</dbReference>
<dbReference type="PANTHER" id="PTHR21272:SF3">
    <property type="entry name" value="CATABOLIC 3-DEHYDROQUINASE"/>
    <property type="match status" value="1"/>
</dbReference>
<dbReference type="Pfam" id="PF01220">
    <property type="entry name" value="DHquinase_II"/>
    <property type="match status" value="1"/>
</dbReference>
<dbReference type="PIRSF" id="PIRSF001399">
    <property type="entry name" value="DHquinase_II"/>
    <property type="match status" value="1"/>
</dbReference>
<dbReference type="SUPFAM" id="SSF52304">
    <property type="entry name" value="Type II 3-dehydroquinate dehydratase"/>
    <property type="match status" value="1"/>
</dbReference>
<dbReference type="PROSITE" id="PS01029">
    <property type="entry name" value="DEHYDROQUINASE_II"/>
    <property type="match status" value="1"/>
</dbReference>
<proteinExistence type="inferred from homology"/>
<sequence length="147" mass="16878">MNNILVINGPNLNLLGKREPDIYGNITLENINQKIKLHFKNEDLKIDFFQSNEEGKIIDKIIESEKKYNAIVINPAAYSHYSIAILDAMRSINIPVVEVHLSNIYKREEYRKKSVTAEASLGVISGFGYYGYIMAIEFILNNLVRER</sequence>
<keyword id="KW-0028">Amino-acid biosynthesis</keyword>
<keyword id="KW-0057">Aromatic amino acid biosynthesis</keyword>
<keyword id="KW-0456">Lyase</keyword>
<protein>
    <recommendedName>
        <fullName evidence="1">3-dehydroquinate dehydratase</fullName>
        <shortName evidence="1">3-dehydroquinase</shortName>
        <ecNumber evidence="1">4.2.1.10</ecNumber>
    </recommendedName>
    <alternativeName>
        <fullName evidence="1">Type II DHQase</fullName>
    </alternativeName>
</protein>
<feature type="chain" id="PRO_1000203666" description="3-dehydroquinate dehydratase">
    <location>
        <begin position="1"/>
        <end position="147"/>
    </location>
</feature>
<feature type="active site" description="Proton acceptor" evidence="1">
    <location>
        <position position="23"/>
    </location>
</feature>
<feature type="active site" description="Proton donor" evidence="1">
    <location>
        <position position="100"/>
    </location>
</feature>
<feature type="binding site" evidence="1">
    <location>
        <position position="74"/>
    </location>
    <ligand>
        <name>substrate</name>
    </ligand>
</feature>
<feature type="binding site" evidence="1">
    <location>
        <position position="80"/>
    </location>
    <ligand>
        <name>substrate</name>
    </ligand>
</feature>
<feature type="binding site" evidence="1">
    <location>
        <position position="87"/>
    </location>
    <ligand>
        <name>substrate</name>
    </ligand>
</feature>
<feature type="binding site" evidence="1">
    <location>
        <begin position="101"/>
        <end position="102"/>
    </location>
    <ligand>
        <name>substrate</name>
    </ligand>
</feature>
<feature type="binding site" evidence="1">
    <location>
        <position position="111"/>
    </location>
    <ligand>
        <name>substrate</name>
    </ligand>
</feature>
<feature type="site" description="Transition state stabilizer" evidence="1">
    <location>
        <position position="18"/>
    </location>
</feature>
<evidence type="ECO:0000255" key="1">
    <source>
        <dbReference type="HAMAP-Rule" id="MF_00169"/>
    </source>
</evidence>
<gene>
    <name evidence="1" type="primary">aroQ</name>
    <name type="ordered locus">CLB_1835</name>
</gene>
<reference key="1">
    <citation type="journal article" date="2007" name="PLoS ONE">
        <title>Analysis of the neurotoxin complex genes in Clostridium botulinum A1-A4 and B1 strains: BoNT/A3, /Ba4 and /B1 clusters are located within plasmids.</title>
        <authorList>
            <person name="Smith T.J."/>
            <person name="Hill K.K."/>
            <person name="Foley B.T."/>
            <person name="Detter J.C."/>
            <person name="Munk A.C."/>
            <person name="Bruce D.C."/>
            <person name="Doggett N.A."/>
            <person name="Smith L.A."/>
            <person name="Marks J.D."/>
            <person name="Xie G."/>
            <person name="Brettin T.S."/>
        </authorList>
    </citation>
    <scope>NUCLEOTIDE SEQUENCE [LARGE SCALE GENOMIC DNA]</scope>
    <source>
        <strain>ATCC 19397 / Type A</strain>
    </source>
</reference>
<name>AROQ_CLOB1</name>